<sequence length="63" mass="7398">MRYLPVFVILLLLIASIPSDTVQLKTKDDMPLASFHGNGRRILRMLSNKRLCCVTEDWCCEWW</sequence>
<evidence type="ECO:0000250" key="1"/>
<evidence type="ECO:0000255" key="2"/>
<evidence type="ECO:0000303" key="3">
    <source>
    </source>
</evidence>
<evidence type="ECO:0000305" key="4"/>
<evidence type="ECO:0000305" key="5">
    <source>
    </source>
</evidence>
<keyword id="KW-0165">Cleavage on pair of basic residues</keyword>
<keyword id="KW-1015">Disulfide bond</keyword>
<keyword id="KW-0964">Secreted</keyword>
<keyword id="KW-0732">Signal</keyword>
<keyword id="KW-0800">Toxin</keyword>
<proteinExistence type="inferred from homology"/>
<protein>
    <recommendedName>
        <fullName evidence="3">Conotoxin Gm5.1</fullName>
    </recommendedName>
</protein>
<organism>
    <name type="scientific">Conus gloriamaris</name>
    <name type="common">Glory-of-the-Sea cone</name>
    <dbReference type="NCBI Taxonomy" id="37336"/>
    <lineage>
        <taxon>Eukaryota</taxon>
        <taxon>Metazoa</taxon>
        <taxon>Spiralia</taxon>
        <taxon>Lophotrochozoa</taxon>
        <taxon>Mollusca</taxon>
        <taxon>Gastropoda</taxon>
        <taxon>Caenogastropoda</taxon>
        <taxon>Neogastropoda</taxon>
        <taxon>Conoidea</taxon>
        <taxon>Conidae</taxon>
        <taxon>Conus</taxon>
        <taxon>Cylinder</taxon>
    </lineage>
</organism>
<name>CT51_CONGL</name>
<reference key="1">
    <citation type="journal article" date="1999" name="J. Biol. Chem.">
        <title>The T-superfamily of conotoxins.</title>
        <authorList>
            <person name="Walker C.S."/>
            <person name="Steel D."/>
            <person name="Jacobsen R.B."/>
            <person name="Lirazan M.B."/>
            <person name="Cruz L.J."/>
            <person name="Hooper D."/>
            <person name="Shetty R."/>
            <person name="DelaCruz R.C."/>
            <person name="Nielsen J.S."/>
            <person name="Zhou L.M."/>
            <person name="Bandyopadhyay P."/>
            <person name="Craig A.G."/>
            <person name="Olivera B.M."/>
        </authorList>
    </citation>
    <scope>NUCLEOTIDE SEQUENCE [MRNA]</scope>
    <source>
        <tissue>Venom duct</tissue>
    </source>
</reference>
<reference key="2">
    <citation type="journal article" date="1999" name="J. Biol. Chem.">
        <authorList>
            <person name="Walker C.S."/>
            <person name="Steel D."/>
            <person name="Jacobsen R.B."/>
            <person name="Lirazan M.B."/>
            <person name="Cruz L.J."/>
            <person name="Hooper D."/>
            <person name="Shetty R."/>
            <person name="DelaCruz R.C."/>
            <person name="Nielsen J.S."/>
            <person name="Zhou L.M."/>
            <person name="Bandyopadhyay P."/>
            <person name="Craig A.G."/>
            <person name="Olivera B.M."/>
        </authorList>
    </citation>
    <scope>ERRATUM OF PUBMED:10521453</scope>
</reference>
<accession>Q9U6Z9</accession>
<comment type="subcellular location">
    <subcellularLocation>
        <location evidence="5">Secreted</location>
    </subcellularLocation>
</comment>
<comment type="tissue specificity">
    <text evidence="5">Expressed by the venom duct.</text>
</comment>
<comment type="domain">
    <text evidence="4">The cysteine framework is V (CC-CC).</text>
</comment>
<comment type="PTM">
    <text evidence="4">Contains 2 disulfide bonds that can be either 'C1-C3, C2-C4' or 'C1-C4, C2-C3', since these disulfide connectivities have been observed for conotoxins with cysteine framework V (for examples, see AC P0DQQ7 and AC P81755).</text>
</comment>
<comment type="similarity">
    <text evidence="4">Belongs to the conotoxin T superfamily.</text>
</comment>
<feature type="signal peptide" evidence="2">
    <location>
        <begin position="1"/>
        <end position="21"/>
    </location>
</feature>
<feature type="propeptide" id="PRO_0000035021" evidence="1">
    <location>
        <begin position="22"/>
        <end position="50"/>
    </location>
</feature>
<feature type="peptide" id="PRO_0000035022" description="Conotoxin Gm5.1">
    <location>
        <begin position="51"/>
        <end position="63"/>
    </location>
</feature>
<dbReference type="EMBL" id="AF167165">
    <property type="protein sequence ID" value="AAF03685.1"/>
    <property type="molecule type" value="mRNA"/>
</dbReference>
<dbReference type="PIR" id="C59147">
    <property type="entry name" value="C59147"/>
</dbReference>
<dbReference type="ConoServer" id="1731">
    <property type="toxin name" value="Gm5.1 precursor"/>
</dbReference>
<dbReference type="GO" id="GO:0005576">
    <property type="term" value="C:extracellular region"/>
    <property type="evidence" value="ECO:0007669"/>
    <property type="project" value="UniProtKB-SubCell"/>
</dbReference>
<dbReference type="GO" id="GO:0090729">
    <property type="term" value="F:toxin activity"/>
    <property type="evidence" value="ECO:0007669"/>
    <property type="project" value="UniProtKB-KW"/>
</dbReference>
<dbReference type="InterPro" id="IPR031565">
    <property type="entry name" value="T-conotoxin"/>
</dbReference>
<dbReference type="Pfam" id="PF16981">
    <property type="entry name" value="Chi-conotoxin"/>
    <property type="match status" value="1"/>
</dbReference>